<sequence>MTSAPIPDITATPAWDALRRHHDQIGNTHLRQFFADDPGRGRELTVSVGDLYIDYSKHRVTRETLALLIDLARTAHLEERRDQMFAGVHINTSEDRAVLHTALRLPRDAELVVDGQDVVTDVHAVLDAMGAFTDRLRSGEWTGATGKRISTVVNIGIGGSDLGPVMVYQALRHYADAGISARFVSNVDPADLIATLADLDPATTLFIVASKTFSTLETLTNATAARRWLTDALGDAAVSRHFVAVSTNKRLVDDFGINTDNMFGFWDWVGGRYSVDSAIGLSLMTVIGRDAFADFLAGFHIIDRHFATAPLESNAPVLLGLIGLWYSNFFGAQSRTVLPYSNDLSRFPAYLQQLTMESNGKSTRADGSPVSADTGEIFWGEPGTNGQHAFYQLLHQGTRLVPADFIGFAQPLDDLPTAEGTGSMHDLLMSNFFAQTQVLAFGKTAEEIAADGTPAHVVAHKVMPGNRPSTSILASRLTPSVLGQLIALYEHQVFTEGVVWGIDSFDQWGVELGKTQAKALLPVITGAGSPPPQSDSSTDGLVRRYRTERGRAG</sequence>
<accession>A5U0Y6</accession>
<gene>
    <name evidence="1" type="primary">pgi</name>
    <name type="ordered locus">MRA_0953</name>
</gene>
<proteinExistence type="inferred from homology"/>
<comment type="function">
    <text evidence="1">Catalyzes the reversible isomerization of glucose-6-phosphate to fructose-6-phosphate.</text>
</comment>
<comment type="catalytic activity">
    <reaction evidence="1">
        <text>alpha-D-glucose 6-phosphate = beta-D-fructose 6-phosphate</text>
        <dbReference type="Rhea" id="RHEA:11816"/>
        <dbReference type="ChEBI" id="CHEBI:57634"/>
        <dbReference type="ChEBI" id="CHEBI:58225"/>
        <dbReference type="EC" id="5.3.1.9"/>
    </reaction>
</comment>
<comment type="pathway">
    <text evidence="1">Carbohydrate biosynthesis; gluconeogenesis.</text>
</comment>
<comment type="pathway">
    <text evidence="1">Carbohydrate degradation; glycolysis; D-glyceraldehyde 3-phosphate and glycerone phosphate from D-glucose: step 2/4.</text>
</comment>
<comment type="subcellular location">
    <subcellularLocation>
        <location evidence="1">Cytoplasm</location>
    </subcellularLocation>
</comment>
<comment type="similarity">
    <text evidence="1">Belongs to the GPI family.</text>
</comment>
<evidence type="ECO:0000255" key="1">
    <source>
        <dbReference type="HAMAP-Rule" id="MF_00473"/>
    </source>
</evidence>
<evidence type="ECO:0000256" key="2">
    <source>
        <dbReference type="SAM" id="MobiDB-lite"/>
    </source>
</evidence>
<dbReference type="EC" id="5.3.1.9" evidence="1"/>
<dbReference type="EMBL" id="CP000611">
    <property type="protein sequence ID" value="ABQ72686.1"/>
    <property type="molecule type" value="Genomic_DNA"/>
</dbReference>
<dbReference type="RefSeq" id="WP_003404830.1">
    <property type="nucleotide sequence ID" value="NZ_CP016972.1"/>
</dbReference>
<dbReference type="SMR" id="A5U0Y6"/>
<dbReference type="GeneID" id="45424915"/>
<dbReference type="KEGG" id="mra:MRA_0953"/>
<dbReference type="eggNOG" id="COG0166">
    <property type="taxonomic scope" value="Bacteria"/>
</dbReference>
<dbReference type="HOGENOM" id="CLU_017947_3_1_11"/>
<dbReference type="BRENDA" id="5.3.1.9">
    <property type="organism ID" value="3445"/>
</dbReference>
<dbReference type="SABIO-RK" id="A5U0Y6"/>
<dbReference type="UniPathway" id="UPA00109">
    <property type="reaction ID" value="UER00181"/>
</dbReference>
<dbReference type="UniPathway" id="UPA00138"/>
<dbReference type="Proteomes" id="UP000001988">
    <property type="component" value="Chromosome"/>
</dbReference>
<dbReference type="GO" id="GO:0005829">
    <property type="term" value="C:cytosol"/>
    <property type="evidence" value="ECO:0007669"/>
    <property type="project" value="TreeGrafter"/>
</dbReference>
<dbReference type="GO" id="GO:0097367">
    <property type="term" value="F:carbohydrate derivative binding"/>
    <property type="evidence" value="ECO:0007669"/>
    <property type="project" value="InterPro"/>
</dbReference>
<dbReference type="GO" id="GO:0004347">
    <property type="term" value="F:glucose-6-phosphate isomerase activity"/>
    <property type="evidence" value="ECO:0007669"/>
    <property type="project" value="UniProtKB-UniRule"/>
</dbReference>
<dbReference type="GO" id="GO:0048029">
    <property type="term" value="F:monosaccharide binding"/>
    <property type="evidence" value="ECO:0007669"/>
    <property type="project" value="TreeGrafter"/>
</dbReference>
<dbReference type="GO" id="GO:0006094">
    <property type="term" value="P:gluconeogenesis"/>
    <property type="evidence" value="ECO:0007669"/>
    <property type="project" value="UniProtKB-UniRule"/>
</dbReference>
<dbReference type="GO" id="GO:0051156">
    <property type="term" value="P:glucose 6-phosphate metabolic process"/>
    <property type="evidence" value="ECO:0007669"/>
    <property type="project" value="TreeGrafter"/>
</dbReference>
<dbReference type="GO" id="GO:0006096">
    <property type="term" value="P:glycolytic process"/>
    <property type="evidence" value="ECO:0007669"/>
    <property type="project" value="UniProtKB-UniRule"/>
</dbReference>
<dbReference type="CDD" id="cd05015">
    <property type="entry name" value="SIS_PGI_1"/>
    <property type="match status" value="1"/>
</dbReference>
<dbReference type="CDD" id="cd05016">
    <property type="entry name" value="SIS_PGI_2"/>
    <property type="match status" value="1"/>
</dbReference>
<dbReference type="FunFam" id="3.40.50.10490:FF:000018">
    <property type="entry name" value="Glucose-6-phosphate isomerase"/>
    <property type="match status" value="1"/>
</dbReference>
<dbReference type="Gene3D" id="1.10.1390.10">
    <property type="match status" value="1"/>
</dbReference>
<dbReference type="Gene3D" id="3.40.50.10490">
    <property type="entry name" value="Glucose-6-phosphate isomerase like protein, domain 1"/>
    <property type="match status" value="2"/>
</dbReference>
<dbReference type="HAMAP" id="MF_00473">
    <property type="entry name" value="G6P_isomerase"/>
    <property type="match status" value="1"/>
</dbReference>
<dbReference type="InterPro" id="IPR001672">
    <property type="entry name" value="G6P_Isomerase"/>
</dbReference>
<dbReference type="InterPro" id="IPR023096">
    <property type="entry name" value="G6P_Isomerase_C"/>
</dbReference>
<dbReference type="InterPro" id="IPR018189">
    <property type="entry name" value="Phosphoglucose_isomerase_CS"/>
</dbReference>
<dbReference type="InterPro" id="IPR046348">
    <property type="entry name" value="SIS_dom_sf"/>
</dbReference>
<dbReference type="InterPro" id="IPR035476">
    <property type="entry name" value="SIS_PGI_1"/>
</dbReference>
<dbReference type="InterPro" id="IPR035482">
    <property type="entry name" value="SIS_PGI_2"/>
</dbReference>
<dbReference type="NCBIfam" id="NF001211">
    <property type="entry name" value="PRK00179.1"/>
    <property type="match status" value="1"/>
</dbReference>
<dbReference type="PANTHER" id="PTHR11469">
    <property type="entry name" value="GLUCOSE-6-PHOSPHATE ISOMERASE"/>
    <property type="match status" value="1"/>
</dbReference>
<dbReference type="PANTHER" id="PTHR11469:SF1">
    <property type="entry name" value="GLUCOSE-6-PHOSPHATE ISOMERASE"/>
    <property type="match status" value="1"/>
</dbReference>
<dbReference type="Pfam" id="PF00342">
    <property type="entry name" value="PGI"/>
    <property type="match status" value="1"/>
</dbReference>
<dbReference type="PRINTS" id="PR00662">
    <property type="entry name" value="G6PISOMERASE"/>
</dbReference>
<dbReference type="SUPFAM" id="SSF53697">
    <property type="entry name" value="SIS domain"/>
    <property type="match status" value="1"/>
</dbReference>
<dbReference type="PROSITE" id="PS00765">
    <property type="entry name" value="P_GLUCOSE_ISOMERASE_1"/>
    <property type="match status" value="1"/>
</dbReference>
<dbReference type="PROSITE" id="PS00174">
    <property type="entry name" value="P_GLUCOSE_ISOMERASE_2"/>
    <property type="match status" value="1"/>
</dbReference>
<dbReference type="PROSITE" id="PS51463">
    <property type="entry name" value="P_GLUCOSE_ISOMERASE_3"/>
    <property type="match status" value="1"/>
</dbReference>
<reference key="1">
    <citation type="journal article" date="2008" name="PLoS ONE">
        <title>Genetic basis of virulence attenuation revealed by comparative genomic analysis of Mycobacterium tuberculosis strain H37Ra versus H37Rv.</title>
        <authorList>
            <person name="Zheng H."/>
            <person name="Lu L."/>
            <person name="Wang B."/>
            <person name="Pu S."/>
            <person name="Zhang X."/>
            <person name="Zhu G."/>
            <person name="Shi W."/>
            <person name="Zhang L."/>
            <person name="Wang H."/>
            <person name="Wang S."/>
            <person name="Zhao G."/>
            <person name="Zhang Y."/>
        </authorList>
    </citation>
    <scope>NUCLEOTIDE SEQUENCE [LARGE SCALE GENOMIC DNA]</scope>
    <source>
        <strain>ATCC 25177 / H37Ra</strain>
    </source>
</reference>
<name>G6PI_MYCTA</name>
<organism>
    <name type="scientific">Mycobacterium tuberculosis (strain ATCC 25177 / H37Ra)</name>
    <dbReference type="NCBI Taxonomy" id="419947"/>
    <lineage>
        <taxon>Bacteria</taxon>
        <taxon>Bacillati</taxon>
        <taxon>Actinomycetota</taxon>
        <taxon>Actinomycetes</taxon>
        <taxon>Mycobacteriales</taxon>
        <taxon>Mycobacteriaceae</taxon>
        <taxon>Mycobacterium</taxon>
        <taxon>Mycobacterium tuberculosis complex</taxon>
    </lineage>
</organism>
<feature type="chain" id="PRO_1000013990" description="Glucose-6-phosphate isomerase">
    <location>
        <begin position="1"/>
        <end position="553"/>
    </location>
</feature>
<feature type="region of interest" description="Disordered" evidence="2">
    <location>
        <begin position="524"/>
        <end position="553"/>
    </location>
</feature>
<feature type="compositionally biased region" description="Basic and acidic residues" evidence="2">
    <location>
        <begin position="541"/>
        <end position="553"/>
    </location>
</feature>
<feature type="active site" description="Proton donor" evidence="1">
    <location>
        <position position="357"/>
    </location>
</feature>
<feature type="active site" evidence="1">
    <location>
        <position position="388"/>
    </location>
</feature>
<feature type="active site" evidence="1">
    <location>
        <position position="514"/>
    </location>
</feature>
<keyword id="KW-0963">Cytoplasm</keyword>
<keyword id="KW-0312">Gluconeogenesis</keyword>
<keyword id="KW-0324">Glycolysis</keyword>
<keyword id="KW-0413">Isomerase</keyword>
<keyword id="KW-1185">Reference proteome</keyword>
<protein>
    <recommendedName>
        <fullName evidence="1">Glucose-6-phosphate isomerase</fullName>
        <shortName evidence="1">GPI</shortName>
        <ecNumber evidence="1">5.3.1.9</ecNumber>
    </recommendedName>
    <alternativeName>
        <fullName evidence="1">Phosphoglucose isomerase</fullName>
        <shortName evidence="1">PGI</shortName>
    </alternativeName>
    <alternativeName>
        <fullName evidence="1">Phosphohexose isomerase</fullName>
        <shortName evidence="1">PHI</shortName>
    </alternativeName>
</protein>